<feature type="chain" id="PRO_0000078612" description="Chaperone protein dnaK">
    <location>
        <begin position="1"/>
        <end position="620"/>
    </location>
</feature>
<feature type="region of interest" description="Disordered" evidence="2">
    <location>
        <begin position="592"/>
        <end position="620"/>
    </location>
</feature>
<feature type="compositionally biased region" description="Acidic residues" evidence="2">
    <location>
        <begin position="610"/>
        <end position="620"/>
    </location>
</feature>
<keyword id="KW-0067">ATP-binding</keyword>
<keyword id="KW-0143">Chaperone</keyword>
<keyword id="KW-0150">Chloroplast</keyword>
<keyword id="KW-0547">Nucleotide-binding</keyword>
<keyword id="KW-0934">Plastid</keyword>
<keyword id="KW-0346">Stress response</keyword>
<evidence type="ECO:0000250" key="1"/>
<evidence type="ECO:0000256" key="2">
    <source>
        <dbReference type="SAM" id="MobiDB-lite"/>
    </source>
</evidence>
<evidence type="ECO:0000305" key="3"/>
<proteinExistence type="inferred from homology"/>
<comment type="function">
    <text evidence="1">Acts as a chaperone.</text>
</comment>
<comment type="subcellular location">
    <subcellularLocation>
        <location>Plastid</location>
        <location>Chloroplast</location>
    </subcellularLocation>
</comment>
<comment type="similarity">
    <text evidence="3">Belongs to the heat shock protein 70 family.</text>
</comment>
<reference key="1">
    <citation type="journal article" date="1991" name="FEBS Lett.">
        <title>An hsp70 homolog is encoded on the plastid genome of the red alga, Porphyra umbilicalis.</title>
        <authorList>
            <person name="Reith M."/>
            <person name="Munholland J."/>
        </authorList>
    </citation>
    <scope>NUCLEOTIDE SEQUENCE [GENOMIC DNA]</scope>
    <source>
        <strain>Avonport</strain>
    </source>
</reference>
<name>DNAK_PORUM</name>
<organism>
    <name type="scientific">Porphyra umbilicalis</name>
    <name type="common">Purple laver</name>
    <name type="synonym">Red alga</name>
    <dbReference type="NCBI Taxonomy" id="2786"/>
    <lineage>
        <taxon>Eukaryota</taxon>
        <taxon>Rhodophyta</taxon>
        <taxon>Bangiophyceae</taxon>
        <taxon>Bangiales</taxon>
        <taxon>Bangiaceae</taxon>
        <taxon>Porphyra</taxon>
    </lineage>
</organism>
<sequence>MGKVVGIDLGTTNSVIAVMEGGKPTVIPNAEGFRTTASVVAYTKSGDKLVGQIARQAVINPENTFYSVKRFIGRKQNEISQEIRQTSYNVKTSGSSIKIECPALNKDFAPEEISAQVLRKLVEDASTYLGETVTQAVITVPAYFNDSQRQATKDAGKIAGLDVLRIINEPTAASLSYGLDKQNNETILVFDLGGGTFDVSILEVGDGVFEVLSTSGDTHLGGDDFDQQIVEWLIKDFKQSEGIDLGKDRQALQRLTEASEKAKIELSNLTQTEINLPFITATQDGPKHLEKTVTRAKFEELCSRLIDKCSIPVNNALKDAKLEASSIDEVVLVGGSTRIPAIQQMVKRLIGKDPNQSVNPDEVVAIGAAVQAGVLAGEVKDILLLDVTPLSLGVETLGGVMTKIIPRNTTIPTKKSEVFSTAVDNQPNVEIQVLQGERELTKDNKSLGTFRLDGIMPAPRGVPQIEVTFDIDANGILSVKAKEKATGKEQSITISGASTLPKDDVERMVKEAEENFDVDQKRRKNIDIRNQAESLCYQSEKQVKEFEDKIDEELKNRITNLISELRSNLEKEELDSIEANSEKLQNALMEIGKNATSAEKDTQNASNDDTVIDTDFSEAK</sequence>
<protein>
    <recommendedName>
        <fullName>Chaperone protein dnaK</fullName>
    </recommendedName>
    <alternativeName>
        <fullName>HSP70</fullName>
    </alternativeName>
    <alternativeName>
        <fullName>Heat shock 70 kDa protein</fullName>
    </alternativeName>
    <alternativeName>
        <fullName>Heat shock protein 70</fullName>
    </alternativeName>
</protein>
<accession>P69377</accession>
<accession>P30723</accession>
<gene>
    <name type="primary">dnaK</name>
</gene>
<dbReference type="EMBL" id="X62240">
    <property type="protein sequence ID" value="CAA44160.1"/>
    <property type="molecule type" value="Genomic_DNA"/>
</dbReference>
<dbReference type="PIR" id="S19660">
    <property type="entry name" value="S19660"/>
</dbReference>
<dbReference type="SMR" id="P69377"/>
<dbReference type="OrthoDB" id="2401965at2759"/>
<dbReference type="GO" id="GO:0009507">
    <property type="term" value="C:chloroplast"/>
    <property type="evidence" value="ECO:0007669"/>
    <property type="project" value="UniProtKB-SubCell"/>
</dbReference>
<dbReference type="GO" id="GO:0005524">
    <property type="term" value="F:ATP binding"/>
    <property type="evidence" value="ECO:0007669"/>
    <property type="project" value="UniProtKB-UniRule"/>
</dbReference>
<dbReference type="GO" id="GO:0140662">
    <property type="term" value="F:ATP-dependent protein folding chaperone"/>
    <property type="evidence" value="ECO:0007669"/>
    <property type="project" value="InterPro"/>
</dbReference>
<dbReference type="GO" id="GO:0051082">
    <property type="term" value="F:unfolded protein binding"/>
    <property type="evidence" value="ECO:0007669"/>
    <property type="project" value="InterPro"/>
</dbReference>
<dbReference type="CDD" id="cd10234">
    <property type="entry name" value="ASKHA_NBD_HSP70_DnaK-like"/>
    <property type="match status" value="1"/>
</dbReference>
<dbReference type="FunFam" id="2.60.34.10:FF:000014">
    <property type="entry name" value="Chaperone protein DnaK HSP70"/>
    <property type="match status" value="1"/>
</dbReference>
<dbReference type="FunFam" id="1.20.1270.10:FF:000001">
    <property type="entry name" value="Molecular chaperone DnaK"/>
    <property type="match status" value="1"/>
</dbReference>
<dbReference type="FunFam" id="3.30.420.40:FF:000004">
    <property type="entry name" value="Molecular chaperone DnaK"/>
    <property type="match status" value="1"/>
</dbReference>
<dbReference type="FunFam" id="3.90.640.10:FF:000003">
    <property type="entry name" value="Molecular chaperone DnaK"/>
    <property type="match status" value="1"/>
</dbReference>
<dbReference type="Gene3D" id="1.20.1270.10">
    <property type="match status" value="1"/>
</dbReference>
<dbReference type="Gene3D" id="3.30.420.40">
    <property type="match status" value="2"/>
</dbReference>
<dbReference type="Gene3D" id="3.90.640.10">
    <property type="entry name" value="Actin, Chain A, domain 4"/>
    <property type="match status" value="1"/>
</dbReference>
<dbReference type="Gene3D" id="2.60.34.10">
    <property type="entry name" value="Substrate Binding Domain Of DNAk, Chain A, domain 1"/>
    <property type="match status" value="1"/>
</dbReference>
<dbReference type="HAMAP" id="MF_00332">
    <property type="entry name" value="DnaK"/>
    <property type="match status" value="1"/>
</dbReference>
<dbReference type="InterPro" id="IPR043129">
    <property type="entry name" value="ATPase_NBD"/>
</dbReference>
<dbReference type="InterPro" id="IPR012725">
    <property type="entry name" value="Chaperone_DnaK"/>
</dbReference>
<dbReference type="InterPro" id="IPR018181">
    <property type="entry name" value="Heat_shock_70_CS"/>
</dbReference>
<dbReference type="InterPro" id="IPR029048">
    <property type="entry name" value="HSP70_C_sf"/>
</dbReference>
<dbReference type="InterPro" id="IPR029047">
    <property type="entry name" value="HSP70_peptide-bd_sf"/>
</dbReference>
<dbReference type="InterPro" id="IPR013126">
    <property type="entry name" value="Hsp_70_fam"/>
</dbReference>
<dbReference type="NCBIfam" id="NF001413">
    <property type="entry name" value="PRK00290.1"/>
    <property type="match status" value="1"/>
</dbReference>
<dbReference type="NCBIfam" id="NF003520">
    <property type="entry name" value="PRK05183.1"/>
    <property type="match status" value="1"/>
</dbReference>
<dbReference type="NCBIfam" id="TIGR02350">
    <property type="entry name" value="prok_dnaK"/>
    <property type="match status" value="1"/>
</dbReference>
<dbReference type="PANTHER" id="PTHR19375">
    <property type="entry name" value="HEAT SHOCK PROTEIN 70KDA"/>
    <property type="match status" value="1"/>
</dbReference>
<dbReference type="Pfam" id="PF00012">
    <property type="entry name" value="HSP70"/>
    <property type="match status" value="1"/>
</dbReference>
<dbReference type="PRINTS" id="PR00301">
    <property type="entry name" value="HEATSHOCK70"/>
</dbReference>
<dbReference type="SUPFAM" id="SSF53067">
    <property type="entry name" value="Actin-like ATPase domain"/>
    <property type="match status" value="2"/>
</dbReference>
<dbReference type="SUPFAM" id="SSF100920">
    <property type="entry name" value="Heat shock protein 70kD (HSP70), peptide-binding domain"/>
    <property type="match status" value="1"/>
</dbReference>
<dbReference type="PROSITE" id="PS00297">
    <property type="entry name" value="HSP70_1"/>
    <property type="match status" value="1"/>
</dbReference>
<dbReference type="PROSITE" id="PS00329">
    <property type="entry name" value="HSP70_2"/>
    <property type="match status" value="1"/>
</dbReference>
<dbReference type="PROSITE" id="PS01036">
    <property type="entry name" value="HSP70_3"/>
    <property type="match status" value="1"/>
</dbReference>
<geneLocation type="chloroplast"/>